<gene>
    <name type="primary">tsaE</name>
    <name type="synonym">yjeE</name>
    <name type="ordered locus">SF4323</name>
    <name type="ordered locus">S4591</name>
</gene>
<reference key="1">
    <citation type="journal article" date="2002" name="Nucleic Acids Res.">
        <title>Genome sequence of Shigella flexneri 2a: insights into pathogenicity through comparison with genomes of Escherichia coli K12 and O157.</title>
        <authorList>
            <person name="Jin Q."/>
            <person name="Yuan Z."/>
            <person name="Xu J."/>
            <person name="Wang Y."/>
            <person name="Shen Y."/>
            <person name="Lu W."/>
            <person name="Wang J."/>
            <person name="Liu H."/>
            <person name="Yang J."/>
            <person name="Yang F."/>
            <person name="Zhang X."/>
            <person name="Zhang J."/>
            <person name="Yang G."/>
            <person name="Wu H."/>
            <person name="Qu D."/>
            <person name="Dong J."/>
            <person name="Sun L."/>
            <person name="Xue Y."/>
            <person name="Zhao A."/>
            <person name="Gao Y."/>
            <person name="Zhu J."/>
            <person name="Kan B."/>
            <person name="Ding K."/>
            <person name="Chen S."/>
            <person name="Cheng H."/>
            <person name="Yao Z."/>
            <person name="He B."/>
            <person name="Chen R."/>
            <person name="Ma D."/>
            <person name="Qiang B."/>
            <person name="Wen Y."/>
            <person name="Hou Y."/>
            <person name="Yu J."/>
        </authorList>
    </citation>
    <scope>NUCLEOTIDE SEQUENCE [LARGE SCALE GENOMIC DNA]</scope>
    <source>
        <strain>301 / Serotype 2a</strain>
    </source>
</reference>
<reference key="2">
    <citation type="journal article" date="2003" name="Infect. Immun.">
        <title>Complete genome sequence and comparative genomics of Shigella flexneri serotype 2a strain 2457T.</title>
        <authorList>
            <person name="Wei J."/>
            <person name="Goldberg M.B."/>
            <person name="Burland V."/>
            <person name="Venkatesan M.M."/>
            <person name="Deng W."/>
            <person name="Fournier G."/>
            <person name="Mayhew G.F."/>
            <person name="Plunkett G. III"/>
            <person name="Rose D.J."/>
            <person name="Darling A."/>
            <person name="Mau B."/>
            <person name="Perna N.T."/>
            <person name="Payne S.M."/>
            <person name="Runyen-Janecky L.J."/>
            <person name="Zhou S."/>
            <person name="Schwartz D.C."/>
            <person name="Blattner F.R."/>
        </authorList>
    </citation>
    <scope>NUCLEOTIDE SEQUENCE [LARGE SCALE GENOMIC DNA]</scope>
    <source>
        <strain>ATCC 700930 / 2457T / Serotype 2a</strain>
    </source>
</reference>
<keyword id="KW-0067">ATP-binding</keyword>
<keyword id="KW-0963">Cytoplasm</keyword>
<keyword id="KW-0460">Magnesium</keyword>
<keyword id="KW-0479">Metal-binding</keyword>
<keyword id="KW-0547">Nucleotide-binding</keyword>
<keyword id="KW-1185">Reference proteome</keyword>
<keyword id="KW-0819">tRNA processing</keyword>
<evidence type="ECO:0000250" key="1"/>
<evidence type="ECO:0000305" key="2"/>
<protein>
    <recommendedName>
        <fullName>tRNA threonylcarbamoyladenosine biosynthesis protein TsaE</fullName>
    </recommendedName>
    <alternativeName>
        <fullName>t(6)A37 threonylcarbamoyladenosine biosynthesis protein TsaE</fullName>
    </alternativeName>
</protein>
<proteinExistence type="inferred from homology"/>
<feature type="chain" id="PRO_0000096207" description="tRNA threonylcarbamoyladenosine biosynthesis protein TsaE">
    <location>
        <begin position="1"/>
        <end position="153"/>
    </location>
</feature>
<feature type="binding site" evidence="1">
    <location>
        <position position="11"/>
    </location>
    <ligand>
        <name>ATP</name>
        <dbReference type="ChEBI" id="CHEBI:30616"/>
    </ligand>
</feature>
<feature type="binding site" evidence="1">
    <location>
        <begin position="38"/>
        <end position="43"/>
    </location>
    <ligand>
        <name>ATP</name>
        <dbReference type="ChEBI" id="CHEBI:30616"/>
    </ligand>
</feature>
<feature type="binding site" evidence="1">
    <location>
        <position position="42"/>
    </location>
    <ligand>
        <name>Mg(2+)</name>
        <dbReference type="ChEBI" id="CHEBI:18420"/>
    </ligand>
</feature>
<feature type="binding site" evidence="1">
    <location>
        <position position="108"/>
    </location>
    <ligand>
        <name>Mg(2+)</name>
        <dbReference type="ChEBI" id="CHEBI:18420"/>
    </ligand>
</feature>
<organism>
    <name type="scientific">Shigella flexneri</name>
    <dbReference type="NCBI Taxonomy" id="623"/>
    <lineage>
        <taxon>Bacteria</taxon>
        <taxon>Pseudomonadati</taxon>
        <taxon>Pseudomonadota</taxon>
        <taxon>Gammaproteobacteria</taxon>
        <taxon>Enterobacterales</taxon>
        <taxon>Enterobacteriaceae</taxon>
        <taxon>Shigella</taxon>
    </lineage>
</organism>
<sequence length="153" mass="16853">MMNRVIPLPDEQATLDLGERVAKACDGATVIYLYGDLGAGKTTFSRGFLQALGHQGNVKSPTYTLVEPYTLDNLMVYHFDLYRLADPEELEFMGIRDYFANDAICLVEWPQQGTGVLPDPDVEIHIDYQAQGREARVSAVSSAGELLLARLAG</sequence>
<comment type="function">
    <text evidence="1">Required for the formation of a threonylcarbamoyl group on adenosine at position 37 (t(6)A37) in tRNAs that read codons beginning with adenine. Is involved in the transfer of the threonylcarbamoyl moiety of threonylcarbamoyl-AMP (TC-AMP) to the N6 group of A37, together with TsaD and TsaB. TsaE seems to play an indirect role in the t(6)A biosynthesis pathway, possibly in regulating the core enzymatic function of TsaD (By similarity).</text>
</comment>
<comment type="subcellular location">
    <subcellularLocation>
        <location evidence="1">Cytoplasm</location>
    </subcellularLocation>
</comment>
<comment type="similarity">
    <text evidence="2">Belongs to the TsaE family.</text>
</comment>
<accession>P0AF69</accession>
<accession>P31805</accession>
<dbReference type="EMBL" id="AE005674">
    <property type="protein sequence ID" value="AAN45740.1"/>
    <property type="molecule type" value="Genomic_DNA"/>
</dbReference>
<dbReference type="EMBL" id="AE014073">
    <property type="protein sequence ID" value="AAP19523.1"/>
    <property type="molecule type" value="Genomic_DNA"/>
</dbReference>
<dbReference type="RefSeq" id="NP_710033.1">
    <property type="nucleotide sequence ID" value="NC_004337.2"/>
</dbReference>
<dbReference type="RefSeq" id="WP_000981977.1">
    <property type="nucleotide sequence ID" value="NZ_WPGW01000048.1"/>
</dbReference>
<dbReference type="SMR" id="P0AF69"/>
<dbReference type="STRING" id="198214.SF4323"/>
<dbReference type="PaxDb" id="198214-SF4323"/>
<dbReference type="GeneID" id="1026824"/>
<dbReference type="GeneID" id="93777653"/>
<dbReference type="KEGG" id="sfl:SF4323"/>
<dbReference type="KEGG" id="sfx:S4591"/>
<dbReference type="PATRIC" id="fig|198214.7.peg.5097"/>
<dbReference type="HOGENOM" id="CLU_087829_2_2_6"/>
<dbReference type="Proteomes" id="UP000001006">
    <property type="component" value="Chromosome"/>
</dbReference>
<dbReference type="Proteomes" id="UP000002673">
    <property type="component" value="Chromosome"/>
</dbReference>
<dbReference type="GO" id="GO:0005737">
    <property type="term" value="C:cytoplasm"/>
    <property type="evidence" value="ECO:0007669"/>
    <property type="project" value="UniProtKB-SubCell"/>
</dbReference>
<dbReference type="GO" id="GO:0005524">
    <property type="term" value="F:ATP binding"/>
    <property type="evidence" value="ECO:0007669"/>
    <property type="project" value="UniProtKB-KW"/>
</dbReference>
<dbReference type="GO" id="GO:0046872">
    <property type="term" value="F:metal ion binding"/>
    <property type="evidence" value="ECO:0007669"/>
    <property type="project" value="UniProtKB-KW"/>
</dbReference>
<dbReference type="GO" id="GO:0002949">
    <property type="term" value="P:tRNA threonylcarbamoyladenosine modification"/>
    <property type="evidence" value="ECO:0007669"/>
    <property type="project" value="InterPro"/>
</dbReference>
<dbReference type="FunFam" id="3.40.50.300:FF:000406">
    <property type="entry name" value="tRNA (N6-adenosine(37)-N6)-threonylcarbamoyltransferase complex ATPase TsaE"/>
    <property type="match status" value="1"/>
</dbReference>
<dbReference type="Gene3D" id="3.40.50.300">
    <property type="entry name" value="P-loop containing nucleotide triphosphate hydrolases"/>
    <property type="match status" value="1"/>
</dbReference>
<dbReference type="InterPro" id="IPR027417">
    <property type="entry name" value="P-loop_NTPase"/>
</dbReference>
<dbReference type="InterPro" id="IPR003442">
    <property type="entry name" value="T6A_TsaE"/>
</dbReference>
<dbReference type="NCBIfam" id="NF007931">
    <property type="entry name" value="PRK10646.1"/>
    <property type="match status" value="1"/>
</dbReference>
<dbReference type="NCBIfam" id="TIGR00150">
    <property type="entry name" value="T6A_YjeE"/>
    <property type="match status" value="1"/>
</dbReference>
<dbReference type="PANTHER" id="PTHR33540">
    <property type="entry name" value="TRNA THREONYLCARBAMOYLADENOSINE BIOSYNTHESIS PROTEIN TSAE"/>
    <property type="match status" value="1"/>
</dbReference>
<dbReference type="PANTHER" id="PTHR33540:SF2">
    <property type="entry name" value="TRNA THREONYLCARBAMOYLADENOSINE BIOSYNTHESIS PROTEIN TSAE"/>
    <property type="match status" value="1"/>
</dbReference>
<dbReference type="Pfam" id="PF02367">
    <property type="entry name" value="TsaE"/>
    <property type="match status" value="1"/>
</dbReference>
<dbReference type="SUPFAM" id="SSF52540">
    <property type="entry name" value="P-loop containing nucleoside triphosphate hydrolases"/>
    <property type="match status" value="1"/>
</dbReference>
<name>TSAE_SHIFL</name>